<proteinExistence type="inferred from homology"/>
<comment type="function">
    <text evidence="1">Peptide chain release factor 1 directs the termination of translation in response to the peptide chain termination codons UAG and UAA.</text>
</comment>
<comment type="subcellular location">
    <subcellularLocation>
        <location evidence="1">Cytoplasm</location>
    </subcellularLocation>
</comment>
<comment type="PTM">
    <text evidence="1">Methylated by PrmC. Methylation increases the termination efficiency of RF1.</text>
</comment>
<comment type="similarity">
    <text evidence="1">Belongs to the prokaryotic/mitochondrial release factor family.</text>
</comment>
<gene>
    <name evidence="1" type="primary">prfA</name>
    <name type="ordered locus">SAOUHSC_02359</name>
</gene>
<dbReference type="EMBL" id="CP000253">
    <property type="protein sequence ID" value="ABD31390.1"/>
    <property type="molecule type" value="Genomic_DNA"/>
</dbReference>
<dbReference type="RefSeq" id="WP_000460242.1">
    <property type="nucleotide sequence ID" value="NZ_LS483365.1"/>
</dbReference>
<dbReference type="RefSeq" id="YP_500835.1">
    <property type="nucleotide sequence ID" value="NC_007795.1"/>
</dbReference>
<dbReference type="SMR" id="Q2FWE0"/>
<dbReference type="STRING" id="93061.SAOUHSC_02359"/>
<dbReference type="PaxDb" id="1280-SAXN108_2363"/>
<dbReference type="GeneID" id="3919402"/>
<dbReference type="KEGG" id="sao:SAOUHSC_02359"/>
<dbReference type="PATRIC" id="fig|93061.5.peg.2136"/>
<dbReference type="eggNOG" id="COG0216">
    <property type="taxonomic scope" value="Bacteria"/>
</dbReference>
<dbReference type="HOGENOM" id="CLU_036856_0_1_9"/>
<dbReference type="OrthoDB" id="9806673at2"/>
<dbReference type="PRO" id="PR:Q2FWE0"/>
<dbReference type="Proteomes" id="UP000008816">
    <property type="component" value="Chromosome"/>
</dbReference>
<dbReference type="GO" id="GO:0005737">
    <property type="term" value="C:cytoplasm"/>
    <property type="evidence" value="ECO:0007669"/>
    <property type="project" value="UniProtKB-SubCell"/>
</dbReference>
<dbReference type="GO" id="GO:0016149">
    <property type="term" value="F:translation release factor activity, codon specific"/>
    <property type="evidence" value="ECO:0007669"/>
    <property type="project" value="UniProtKB-UniRule"/>
</dbReference>
<dbReference type="FunFam" id="3.30.160.20:FF:000004">
    <property type="entry name" value="Peptide chain release factor 1"/>
    <property type="match status" value="1"/>
</dbReference>
<dbReference type="FunFam" id="3.30.70.1660:FF:000002">
    <property type="entry name" value="Peptide chain release factor 1"/>
    <property type="match status" value="1"/>
</dbReference>
<dbReference type="FunFam" id="3.30.70.1660:FF:000004">
    <property type="entry name" value="Peptide chain release factor 1"/>
    <property type="match status" value="1"/>
</dbReference>
<dbReference type="Gene3D" id="3.30.160.20">
    <property type="match status" value="1"/>
</dbReference>
<dbReference type="Gene3D" id="3.30.70.1660">
    <property type="match status" value="1"/>
</dbReference>
<dbReference type="Gene3D" id="6.10.140.1950">
    <property type="match status" value="1"/>
</dbReference>
<dbReference type="HAMAP" id="MF_00093">
    <property type="entry name" value="Rel_fac_1"/>
    <property type="match status" value="1"/>
</dbReference>
<dbReference type="InterPro" id="IPR005139">
    <property type="entry name" value="PCRF"/>
</dbReference>
<dbReference type="InterPro" id="IPR000352">
    <property type="entry name" value="Pep_chain_release_fac_I"/>
</dbReference>
<dbReference type="InterPro" id="IPR045853">
    <property type="entry name" value="Pep_chain_release_fac_I_sf"/>
</dbReference>
<dbReference type="InterPro" id="IPR050057">
    <property type="entry name" value="Prokaryotic/Mito_RF"/>
</dbReference>
<dbReference type="InterPro" id="IPR004373">
    <property type="entry name" value="RF-1"/>
</dbReference>
<dbReference type="NCBIfam" id="TIGR00019">
    <property type="entry name" value="prfA"/>
    <property type="match status" value="1"/>
</dbReference>
<dbReference type="NCBIfam" id="NF001859">
    <property type="entry name" value="PRK00591.1"/>
    <property type="match status" value="1"/>
</dbReference>
<dbReference type="PANTHER" id="PTHR43804">
    <property type="entry name" value="LD18447P"/>
    <property type="match status" value="1"/>
</dbReference>
<dbReference type="PANTHER" id="PTHR43804:SF7">
    <property type="entry name" value="LD18447P"/>
    <property type="match status" value="1"/>
</dbReference>
<dbReference type="Pfam" id="PF03462">
    <property type="entry name" value="PCRF"/>
    <property type="match status" value="1"/>
</dbReference>
<dbReference type="Pfam" id="PF00472">
    <property type="entry name" value="RF-1"/>
    <property type="match status" value="1"/>
</dbReference>
<dbReference type="SMART" id="SM00937">
    <property type="entry name" value="PCRF"/>
    <property type="match status" value="1"/>
</dbReference>
<dbReference type="SUPFAM" id="SSF75620">
    <property type="entry name" value="Release factor"/>
    <property type="match status" value="1"/>
</dbReference>
<dbReference type="PROSITE" id="PS00745">
    <property type="entry name" value="RF_PROK_I"/>
    <property type="match status" value="1"/>
</dbReference>
<feature type="chain" id="PRO_0000263359" description="Peptide chain release factor 1">
    <location>
        <begin position="1"/>
        <end position="358"/>
    </location>
</feature>
<feature type="modified residue" description="N5-methylglutamine" evidence="1">
    <location>
        <position position="233"/>
    </location>
</feature>
<evidence type="ECO:0000255" key="1">
    <source>
        <dbReference type="HAMAP-Rule" id="MF_00093"/>
    </source>
</evidence>
<keyword id="KW-0963">Cytoplasm</keyword>
<keyword id="KW-0488">Methylation</keyword>
<keyword id="KW-0648">Protein biosynthesis</keyword>
<keyword id="KW-1185">Reference proteome</keyword>
<protein>
    <recommendedName>
        <fullName evidence="1">Peptide chain release factor 1</fullName>
        <shortName evidence="1">RF-1</shortName>
    </recommendedName>
</protein>
<accession>Q2FWE0</accession>
<organism>
    <name type="scientific">Staphylococcus aureus (strain NCTC 8325 / PS 47)</name>
    <dbReference type="NCBI Taxonomy" id="93061"/>
    <lineage>
        <taxon>Bacteria</taxon>
        <taxon>Bacillati</taxon>
        <taxon>Bacillota</taxon>
        <taxon>Bacilli</taxon>
        <taxon>Bacillales</taxon>
        <taxon>Staphylococcaceae</taxon>
        <taxon>Staphylococcus</taxon>
    </lineage>
</organism>
<name>RF1_STAA8</name>
<reference key="1">
    <citation type="book" date="2006" name="Gram positive pathogens, 2nd edition">
        <title>The Staphylococcus aureus NCTC 8325 genome.</title>
        <editorList>
            <person name="Fischetti V."/>
            <person name="Novick R."/>
            <person name="Ferretti J."/>
            <person name="Portnoy D."/>
            <person name="Rood J."/>
        </editorList>
        <authorList>
            <person name="Gillaspy A.F."/>
            <person name="Worrell V."/>
            <person name="Orvis J."/>
            <person name="Roe B.A."/>
            <person name="Dyer D.W."/>
            <person name="Iandolo J.J."/>
        </authorList>
    </citation>
    <scope>NUCLEOTIDE SEQUENCE [LARGE SCALE GENOMIC DNA]</scope>
    <source>
        <strain>NCTC 8325 / PS 47</strain>
    </source>
</reference>
<sequence>MFDQLDIVEERYEQLNELLSDPDVVNDSDKLRKYSKEQADLQKTVDVYRNYKAKKEELADIEEMLSETDDKEEVEMLKEESNGIKAELPNLEEELKILLIPKDPNDDKDVIVEIRAAAGGDEAAIFAGDLMRMYSKYAESQGFKTEIVEASESDHGGYKEISFSVSGNGAYSKLKFENGAHRVQRVPETESGGRIHTSTATVAVLPEVEDVEIEIRNEDLKIDTYRSSGAGGQHVNTTDSAVRITHLPTGVIATSSEKSQIQNREKAMKVLKARLYDMKVQEEQQKYASQRKSAVGTGDRSERIRTYNYPQSRVTDHRIGLTLQKLGQIMEGHLEEIIDALTLSEQTDKLKELNNGEL</sequence>